<sequence length="154" mass="16799">MPVLQIRKIGDPVLRSKAKPVTEITKKTLSLIDNMVETMYQAEGVGLAAPQVGVSKRIIVVDTGEGQGLIELINPEIIETEGKDIMEEGCLSVPGQTGKVIRASKVTVKGLNRGGKEVRIRAEGFLARAFQHEIDHLNGILFIDKVVRIGEEMI</sequence>
<gene>
    <name evidence="1" type="primary">def</name>
    <name type="ordered locus">Hore_09890</name>
</gene>
<dbReference type="EC" id="3.5.1.88" evidence="1"/>
<dbReference type="EMBL" id="CP001098">
    <property type="protein sequence ID" value="ACL69745.1"/>
    <property type="molecule type" value="Genomic_DNA"/>
</dbReference>
<dbReference type="RefSeq" id="WP_012635930.1">
    <property type="nucleotide sequence ID" value="NC_011899.1"/>
</dbReference>
<dbReference type="SMR" id="B8CWS6"/>
<dbReference type="STRING" id="373903.Hore_09890"/>
<dbReference type="KEGG" id="hor:Hore_09890"/>
<dbReference type="eggNOG" id="COG0242">
    <property type="taxonomic scope" value="Bacteria"/>
</dbReference>
<dbReference type="HOGENOM" id="CLU_061901_4_2_9"/>
<dbReference type="OrthoDB" id="9784988at2"/>
<dbReference type="Proteomes" id="UP000000719">
    <property type="component" value="Chromosome"/>
</dbReference>
<dbReference type="GO" id="GO:0046872">
    <property type="term" value="F:metal ion binding"/>
    <property type="evidence" value="ECO:0007669"/>
    <property type="project" value="UniProtKB-KW"/>
</dbReference>
<dbReference type="GO" id="GO:0042586">
    <property type="term" value="F:peptide deformylase activity"/>
    <property type="evidence" value="ECO:0007669"/>
    <property type="project" value="UniProtKB-UniRule"/>
</dbReference>
<dbReference type="GO" id="GO:0043686">
    <property type="term" value="P:co-translational protein modification"/>
    <property type="evidence" value="ECO:0007669"/>
    <property type="project" value="TreeGrafter"/>
</dbReference>
<dbReference type="GO" id="GO:0006412">
    <property type="term" value="P:translation"/>
    <property type="evidence" value="ECO:0007669"/>
    <property type="project" value="UniProtKB-UniRule"/>
</dbReference>
<dbReference type="CDD" id="cd00487">
    <property type="entry name" value="Pep_deformylase"/>
    <property type="match status" value="1"/>
</dbReference>
<dbReference type="FunFam" id="3.90.45.10:FF:000005">
    <property type="entry name" value="Peptide deformylase"/>
    <property type="match status" value="1"/>
</dbReference>
<dbReference type="Gene3D" id="3.90.45.10">
    <property type="entry name" value="Peptide deformylase"/>
    <property type="match status" value="1"/>
</dbReference>
<dbReference type="HAMAP" id="MF_00163">
    <property type="entry name" value="Pep_deformylase"/>
    <property type="match status" value="1"/>
</dbReference>
<dbReference type="InterPro" id="IPR023635">
    <property type="entry name" value="Peptide_deformylase"/>
</dbReference>
<dbReference type="InterPro" id="IPR036821">
    <property type="entry name" value="Peptide_deformylase_sf"/>
</dbReference>
<dbReference type="NCBIfam" id="TIGR00079">
    <property type="entry name" value="pept_deformyl"/>
    <property type="match status" value="1"/>
</dbReference>
<dbReference type="NCBIfam" id="NF001159">
    <property type="entry name" value="PRK00150.1-3"/>
    <property type="match status" value="1"/>
</dbReference>
<dbReference type="PANTHER" id="PTHR10458">
    <property type="entry name" value="PEPTIDE DEFORMYLASE"/>
    <property type="match status" value="1"/>
</dbReference>
<dbReference type="PANTHER" id="PTHR10458:SF22">
    <property type="entry name" value="PEPTIDE DEFORMYLASE"/>
    <property type="match status" value="1"/>
</dbReference>
<dbReference type="Pfam" id="PF01327">
    <property type="entry name" value="Pep_deformylase"/>
    <property type="match status" value="1"/>
</dbReference>
<dbReference type="PIRSF" id="PIRSF004749">
    <property type="entry name" value="Pep_def"/>
    <property type="match status" value="1"/>
</dbReference>
<dbReference type="PRINTS" id="PR01576">
    <property type="entry name" value="PDEFORMYLASE"/>
</dbReference>
<dbReference type="SUPFAM" id="SSF56420">
    <property type="entry name" value="Peptide deformylase"/>
    <property type="match status" value="1"/>
</dbReference>
<organism>
    <name type="scientific">Halothermothrix orenii (strain H 168 / OCM 544 / DSM 9562)</name>
    <dbReference type="NCBI Taxonomy" id="373903"/>
    <lineage>
        <taxon>Bacteria</taxon>
        <taxon>Bacillati</taxon>
        <taxon>Bacillota</taxon>
        <taxon>Clostridia</taxon>
        <taxon>Halanaerobiales</taxon>
        <taxon>Halothermotrichaceae</taxon>
        <taxon>Halothermothrix</taxon>
    </lineage>
</organism>
<keyword id="KW-0378">Hydrolase</keyword>
<keyword id="KW-0408">Iron</keyword>
<keyword id="KW-0479">Metal-binding</keyword>
<keyword id="KW-0648">Protein biosynthesis</keyword>
<keyword id="KW-1185">Reference proteome</keyword>
<name>DEF_HALOH</name>
<comment type="function">
    <text evidence="1">Removes the formyl group from the N-terminal Met of newly synthesized proteins. Requires at least a dipeptide for an efficient rate of reaction. N-terminal L-methionine is a prerequisite for activity but the enzyme has broad specificity at other positions.</text>
</comment>
<comment type="catalytic activity">
    <reaction evidence="1">
        <text>N-terminal N-formyl-L-methionyl-[peptide] + H2O = N-terminal L-methionyl-[peptide] + formate</text>
        <dbReference type="Rhea" id="RHEA:24420"/>
        <dbReference type="Rhea" id="RHEA-COMP:10639"/>
        <dbReference type="Rhea" id="RHEA-COMP:10640"/>
        <dbReference type="ChEBI" id="CHEBI:15377"/>
        <dbReference type="ChEBI" id="CHEBI:15740"/>
        <dbReference type="ChEBI" id="CHEBI:49298"/>
        <dbReference type="ChEBI" id="CHEBI:64731"/>
        <dbReference type="EC" id="3.5.1.88"/>
    </reaction>
</comment>
<comment type="cofactor">
    <cofactor evidence="1">
        <name>Fe(2+)</name>
        <dbReference type="ChEBI" id="CHEBI:29033"/>
    </cofactor>
    <text evidence="1">Binds 1 Fe(2+) ion.</text>
</comment>
<comment type="similarity">
    <text evidence="1">Belongs to the polypeptide deformylase family.</text>
</comment>
<protein>
    <recommendedName>
        <fullName evidence="1">Peptide deformylase</fullName>
        <shortName evidence="1">PDF</shortName>
        <ecNumber evidence="1">3.5.1.88</ecNumber>
    </recommendedName>
    <alternativeName>
        <fullName evidence="1">Polypeptide deformylase</fullName>
    </alternativeName>
</protein>
<evidence type="ECO:0000255" key="1">
    <source>
        <dbReference type="HAMAP-Rule" id="MF_00163"/>
    </source>
</evidence>
<reference key="1">
    <citation type="journal article" date="2009" name="PLoS ONE">
        <title>Genome analysis of the anaerobic thermohalophilic bacterium Halothermothrix orenii.</title>
        <authorList>
            <person name="Mavromatis K."/>
            <person name="Ivanova N."/>
            <person name="Anderson I."/>
            <person name="Lykidis A."/>
            <person name="Hooper S.D."/>
            <person name="Sun H."/>
            <person name="Kunin V."/>
            <person name="Lapidus A."/>
            <person name="Hugenholtz P."/>
            <person name="Patel B."/>
            <person name="Kyrpides N.C."/>
        </authorList>
    </citation>
    <scope>NUCLEOTIDE SEQUENCE [LARGE SCALE GENOMIC DNA]</scope>
    <source>
        <strain>H 168 / OCM 544 / DSM 9562</strain>
    </source>
</reference>
<accession>B8CWS6</accession>
<proteinExistence type="inferred from homology"/>
<feature type="chain" id="PRO_1000200736" description="Peptide deformylase">
    <location>
        <begin position="1"/>
        <end position="154"/>
    </location>
</feature>
<feature type="active site" evidence="1">
    <location>
        <position position="133"/>
    </location>
</feature>
<feature type="binding site" evidence="1">
    <location>
        <position position="90"/>
    </location>
    <ligand>
        <name>Fe cation</name>
        <dbReference type="ChEBI" id="CHEBI:24875"/>
    </ligand>
</feature>
<feature type="binding site" evidence="1">
    <location>
        <position position="132"/>
    </location>
    <ligand>
        <name>Fe cation</name>
        <dbReference type="ChEBI" id="CHEBI:24875"/>
    </ligand>
</feature>
<feature type="binding site" evidence="1">
    <location>
        <position position="136"/>
    </location>
    <ligand>
        <name>Fe cation</name>
        <dbReference type="ChEBI" id="CHEBI:24875"/>
    </ligand>
</feature>